<organism>
    <name type="scientific">Streptomyces coelicolor (strain ATCC BAA-471 / A3(2) / M145)</name>
    <dbReference type="NCBI Taxonomy" id="100226"/>
    <lineage>
        <taxon>Bacteria</taxon>
        <taxon>Bacillati</taxon>
        <taxon>Actinomycetota</taxon>
        <taxon>Actinomycetes</taxon>
        <taxon>Kitasatosporales</taxon>
        <taxon>Streptomycetaceae</taxon>
        <taxon>Streptomyces</taxon>
        <taxon>Streptomyces albidoflavus group</taxon>
    </lineage>
</organism>
<protein>
    <recommendedName>
        <fullName evidence="5">Sortase SrtE1</fullName>
        <ecNumber evidence="7">3.4.22.70</ecNumber>
    </recommendedName>
    <alternativeName>
        <fullName evidence="6">Sortase E1 transpeptidase</fullName>
    </alternativeName>
</protein>
<name>SRTE1_STRCO</name>
<accession>Q9XA14</accession>
<gene>
    <name evidence="5" type="primary">srtE1</name>
    <name type="ordered locus">SCO3850</name>
</gene>
<feature type="chain" id="PRO_0000445191" description="Sortase SrtE1">
    <location>
        <begin position="1"/>
        <end position="352"/>
    </location>
</feature>
<feature type="topological domain" description="Cytoplasmic" evidence="8">
    <location>
        <begin position="1"/>
        <end position="139"/>
    </location>
</feature>
<feature type="transmembrane region" description="Helical" evidence="1">
    <location>
        <begin position="140"/>
        <end position="160"/>
    </location>
</feature>
<feature type="topological domain" description="Extracellular" evidence="8">
    <location>
        <begin position="161"/>
        <end position="352"/>
    </location>
</feature>
<feature type="region of interest" description="Disordered" evidence="2">
    <location>
        <begin position="1"/>
        <end position="132"/>
    </location>
</feature>
<feature type="region of interest" description="Required for protein stability" evidence="4">
    <location>
        <begin position="15"/>
        <end position="79"/>
    </location>
</feature>
<feature type="compositionally biased region" description="Basic and acidic residues" evidence="2">
    <location>
        <begin position="1"/>
        <end position="10"/>
    </location>
</feature>
<feature type="compositionally biased region" description="Basic and acidic residues" evidence="2">
    <location>
        <begin position="34"/>
        <end position="45"/>
    </location>
</feature>
<feature type="compositionally biased region" description="Gly residues" evidence="2">
    <location>
        <begin position="71"/>
        <end position="82"/>
    </location>
</feature>
<feature type="compositionally biased region" description="Basic residues" evidence="2">
    <location>
        <begin position="83"/>
        <end position="97"/>
    </location>
</feature>
<feature type="active site" evidence="8">
    <location>
        <position position="251"/>
    </location>
</feature>
<feature type="active site" evidence="7 8">
    <location>
        <position position="320"/>
    </location>
</feature>
<feature type="active site" description="Proton donor" evidence="8">
    <location>
        <position position="329"/>
    </location>
</feature>
<feature type="site" description="Substrate recognition" evidence="8">
    <location>
        <position position="229"/>
    </location>
</feature>
<feature type="mutagenesis site" description="Wild-type function, restores sporulation to double srtE1-srtE2 knockout." evidence="4">
    <location>
        <begin position="82"/>
        <end position="90"/>
    </location>
</feature>
<feature type="mutagenesis site" description="No effect, this is not the start codon." evidence="3">
    <original>V</original>
    <variation>A</variation>
    <location>
        <position position="119"/>
    </location>
</feature>
<feature type="mutagenesis site" description="Inactive, does not complement a double srtE1-srtE2 knockout. Significantly reduced in vitro peptide cleavage activity." evidence="3">
    <original>C</original>
    <variation>A</variation>
    <location>
        <position position="320"/>
    </location>
</feature>
<feature type="strand" evidence="10">
    <location>
        <begin position="196"/>
        <end position="202"/>
    </location>
</feature>
<feature type="helix" evidence="10">
    <location>
        <begin position="203"/>
        <end position="205"/>
    </location>
</feature>
<feature type="strand" evidence="10">
    <location>
        <begin position="207"/>
        <end position="214"/>
    </location>
</feature>
<feature type="turn" evidence="10">
    <location>
        <begin position="217"/>
        <end position="220"/>
    </location>
</feature>
<feature type="helix" evidence="10">
    <location>
        <begin position="221"/>
        <end position="223"/>
    </location>
</feature>
<feature type="strand" evidence="10">
    <location>
        <begin position="226"/>
        <end position="228"/>
    </location>
</feature>
<feature type="strand" evidence="10">
    <location>
        <begin position="241"/>
        <end position="249"/>
    </location>
</feature>
<feature type="strand" evidence="10">
    <location>
        <begin position="252"/>
        <end position="254"/>
    </location>
</feature>
<feature type="turn" evidence="10">
    <location>
        <begin position="258"/>
        <end position="261"/>
    </location>
</feature>
<feature type="helix" evidence="10">
    <location>
        <begin position="262"/>
        <end position="264"/>
    </location>
</feature>
<feature type="strand" evidence="10">
    <location>
        <begin position="270"/>
        <end position="274"/>
    </location>
</feature>
<feature type="strand" evidence="10">
    <location>
        <begin position="276"/>
        <end position="291"/>
    </location>
</feature>
<feature type="helix" evidence="10">
    <location>
        <begin position="296"/>
        <end position="299"/>
    </location>
</feature>
<feature type="strand" evidence="10">
    <location>
        <begin position="300"/>
        <end position="302"/>
    </location>
</feature>
<feature type="strand" evidence="10">
    <location>
        <begin position="313"/>
        <end position="322"/>
    </location>
</feature>
<feature type="strand" evidence="10">
    <location>
        <begin position="327"/>
        <end position="341"/>
    </location>
</feature>
<feature type="helix" evidence="10">
    <location>
        <begin position="342"/>
        <end position="344"/>
    </location>
</feature>
<feature type="helix" evidence="10">
    <location>
        <begin position="348"/>
        <end position="350"/>
    </location>
</feature>
<dbReference type="EC" id="3.4.22.70" evidence="7"/>
<dbReference type="EMBL" id="AL939118">
    <property type="protein sequence ID" value="CAB45217.1"/>
    <property type="molecule type" value="Genomic_DNA"/>
</dbReference>
<dbReference type="PIR" id="T36719">
    <property type="entry name" value="T36719"/>
</dbReference>
<dbReference type="RefSeq" id="NP_628038.1">
    <property type="nucleotide sequence ID" value="NC_003888.3"/>
</dbReference>
<dbReference type="RefSeq" id="WP_011029270.1">
    <property type="nucleotide sequence ID" value="NZ_VNID01000003.1"/>
</dbReference>
<dbReference type="PDB" id="5CUW">
    <property type="method" value="X-ray"/>
    <property type="resolution" value="1.89 A"/>
    <property type="chains" value="A=162-352"/>
</dbReference>
<dbReference type="PDBsum" id="5CUW"/>
<dbReference type="SMR" id="Q9XA14"/>
<dbReference type="STRING" id="100226.gene:17761475"/>
<dbReference type="PaxDb" id="100226-SCO3850"/>
<dbReference type="KEGG" id="sco:SCO3850"/>
<dbReference type="PATRIC" id="fig|100226.15.peg.3921"/>
<dbReference type="eggNOG" id="COG3764">
    <property type="taxonomic scope" value="Bacteria"/>
</dbReference>
<dbReference type="HOGENOM" id="CLU_045680_5_2_11"/>
<dbReference type="InParanoid" id="Q9XA14"/>
<dbReference type="OrthoDB" id="5242879at2"/>
<dbReference type="PhylomeDB" id="Q9XA14"/>
<dbReference type="Proteomes" id="UP000001973">
    <property type="component" value="Chromosome"/>
</dbReference>
<dbReference type="GO" id="GO:0005886">
    <property type="term" value="C:plasma membrane"/>
    <property type="evidence" value="ECO:0007669"/>
    <property type="project" value="UniProtKB-SubCell"/>
</dbReference>
<dbReference type="GO" id="GO:0008233">
    <property type="term" value="F:peptidase activity"/>
    <property type="evidence" value="ECO:0007669"/>
    <property type="project" value="UniProtKB-KW"/>
</dbReference>
<dbReference type="GO" id="GO:0006508">
    <property type="term" value="P:proteolysis"/>
    <property type="evidence" value="ECO:0007669"/>
    <property type="project" value="UniProtKB-KW"/>
</dbReference>
<dbReference type="CDD" id="cd05830">
    <property type="entry name" value="Sortase_E"/>
    <property type="match status" value="1"/>
</dbReference>
<dbReference type="Gene3D" id="2.40.260.10">
    <property type="entry name" value="Sortase"/>
    <property type="match status" value="1"/>
</dbReference>
<dbReference type="InterPro" id="IPR005754">
    <property type="entry name" value="Sortase"/>
</dbReference>
<dbReference type="InterPro" id="IPR053465">
    <property type="entry name" value="Sortase_Class_E"/>
</dbReference>
<dbReference type="InterPro" id="IPR023365">
    <property type="entry name" value="Sortase_dom-sf"/>
</dbReference>
<dbReference type="InterPro" id="IPR042003">
    <property type="entry name" value="Sortase_E"/>
</dbReference>
<dbReference type="NCBIfam" id="NF033747">
    <property type="entry name" value="class_E_sortase"/>
    <property type="match status" value="1"/>
</dbReference>
<dbReference type="NCBIfam" id="TIGR01076">
    <property type="entry name" value="sortase_fam"/>
    <property type="match status" value="1"/>
</dbReference>
<dbReference type="Pfam" id="PF04203">
    <property type="entry name" value="Sortase"/>
    <property type="match status" value="1"/>
</dbReference>
<dbReference type="SUPFAM" id="SSF63817">
    <property type="entry name" value="Sortase"/>
    <property type="match status" value="1"/>
</dbReference>
<reference key="1">
    <citation type="journal article" date="2002" name="Nature">
        <title>Complete genome sequence of the model actinomycete Streptomyces coelicolor A3(2).</title>
        <authorList>
            <person name="Bentley S.D."/>
            <person name="Chater K.F."/>
            <person name="Cerdeno-Tarraga A.-M."/>
            <person name="Challis G.L."/>
            <person name="Thomson N.R."/>
            <person name="James K.D."/>
            <person name="Harris D.E."/>
            <person name="Quail M.A."/>
            <person name="Kieser H."/>
            <person name="Harper D."/>
            <person name="Bateman A."/>
            <person name="Brown S."/>
            <person name="Chandra G."/>
            <person name="Chen C.W."/>
            <person name="Collins M."/>
            <person name="Cronin A."/>
            <person name="Fraser A."/>
            <person name="Goble A."/>
            <person name="Hidalgo J."/>
            <person name="Hornsby T."/>
            <person name="Howarth S."/>
            <person name="Huang C.-H."/>
            <person name="Kieser T."/>
            <person name="Larke L."/>
            <person name="Murphy L.D."/>
            <person name="Oliver K."/>
            <person name="O'Neil S."/>
            <person name="Rabbinowitsch E."/>
            <person name="Rajandream M.A."/>
            <person name="Rutherford K.M."/>
            <person name="Rutter S."/>
            <person name="Seeger K."/>
            <person name="Saunders D."/>
            <person name="Sharp S."/>
            <person name="Squares R."/>
            <person name="Squares S."/>
            <person name="Taylor K."/>
            <person name="Warren T."/>
            <person name="Wietzorrek A."/>
            <person name="Woodward J.R."/>
            <person name="Barrell B.G."/>
            <person name="Parkhill J."/>
            <person name="Hopwood D.A."/>
        </authorList>
    </citation>
    <scope>NUCLEOTIDE SEQUENCE [LARGE SCALE GENOMIC DNA]</scope>
    <source>
        <strain>ATCC BAA-471 / A3(2) / M145</strain>
    </source>
</reference>
<reference key="2">
    <citation type="journal article" date="2012" name="Mol. Microbiol.">
        <title>Aerial development in Streptomyces coelicolor requires sortase activity.</title>
        <authorList>
            <person name="Duong A."/>
            <person name="Capstick D.S."/>
            <person name="Di Berardo C."/>
            <person name="Findlay K.C."/>
            <person name="Hesketh A."/>
            <person name="Hong H.J."/>
            <person name="Elliot M.A."/>
        </authorList>
    </citation>
    <scope>FUNCTION</scope>
    <scope>CATALYTIC ACTIVITY</scope>
    <scope>POSSIBLE ACTIVE SITE</scope>
    <scope>INDUCTION</scope>
    <scope>DISRUPTION PHENOTYPE</scope>
    <scope>MUTAGENESIS OF VAL-119 AND CYS-320</scope>
    <source>
        <strain>A3(2) / M600</strain>
    </source>
</reference>
<reference evidence="9" key="3">
    <citation type="journal article" date="2016" name="PLoS ONE">
        <title>Crystal structure of the Streptomyces coelicolor sortase E1 transpeptidase provides insight into the binding mode of the novel class E sorting signal.</title>
        <authorList>
            <person name="Kattke M.D."/>
            <person name="Chan A.H."/>
            <person name="Duong A."/>
            <person name="Sexton D.L."/>
            <person name="Sawaya M.R."/>
            <person name="Cascio D."/>
            <person name="Elliot M.A."/>
            <person name="Clubb R.T."/>
        </authorList>
    </citation>
    <scope>X-RAY CRYSTALLOGRAPHY (1.89 ANGSTROMS) OF 162-352 IN COMPLEX WITH SUBSTRATE ANALOG</scope>
    <scope>FUNCTION</scope>
    <scope>POSSIBLE ACTIVE SITE</scope>
    <scope>DOMAIN</scope>
    <scope>MUTAGENESIS OF 82-ARG--LYS-90</scope>
</reference>
<proteinExistence type="evidence at protein level"/>
<sequence length="352" mass="37820">MTALRPERDSGTAGDQGSSYGQPYGDSGAFGGGRYEESAAGEENRPPLLDDETVALRIPEPPAPRTAAGTGPIGGGPDGGGRAARRKAAKRRHGRRGAPRDQAPEEEAEQAPKAPLSRVEARRQARARKPGAAVVASRAIGEIFITTGVLMLLFVTYQLWWTNVRAHAQANQAASNLQDDWANGKRSPGSFEPGQGFALLHIPKLDVVVPIAEGISSKKVLDRGMVGHYAEDGLKTAMPDAKAGNFGLAGHRNTHGEPFRYINKLEPGDPIVVETQDKYFVYKMASILPVTSPSNVSVLDPVPKQSGFKGPGRYITLTTCTPEFTSKYRMIVWGKMVEERPRSKGKPDALVS</sequence>
<keyword id="KW-0002">3D-structure</keyword>
<keyword id="KW-1003">Cell membrane</keyword>
<keyword id="KW-0378">Hydrolase</keyword>
<keyword id="KW-0472">Membrane</keyword>
<keyword id="KW-0645">Protease</keyword>
<keyword id="KW-1185">Reference proteome</keyword>
<keyword id="KW-0812">Transmembrane</keyword>
<keyword id="KW-1133">Transmembrane helix</keyword>
<comment type="function">
    <text evidence="3 4">Transpeptidase that anchors surface proteins to the cell wall. Recognizes both Leu-Ala-x-Thr-Gly and Leu-Pro-x-Thr-Gly, with a preference for the former. Unlike the S.aureus sortase it cleaves not only the Thr-Gly motif but also the Ala-X bond; Ala-Glu and Ala-His bonds are better substrates than the Thr-Gly motif in vitro (PubMed:22296345, PubMed:27936128). Among its possible substrates are the chaplins ChpA, ChpB and ChpC; this enzyme is less important for ChpC attachment than is SrtE2. A double knockout mutant of srtE1 and srtE2 shows a developmental defect in aerial hyphae formation more dramatic than that due to chaplin deletion (PubMed:22296345).</text>
</comment>
<comment type="catalytic activity">
    <reaction evidence="7">
        <text>The enzyme catalyzes a cell wall sorting reaction in which a surface protein with a sorting signal containing a LPXTG motif is cleaved between the Thr and Gly residue. The resulting threonine carboxyl end of the protein is covalently attached to a pentaglycine cross-bridge of peptidoglycan.</text>
        <dbReference type="EC" id="3.4.22.70"/>
    </reaction>
</comment>
<comment type="subcellular location">
    <subcellularLocation>
        <location evidence="1">Cell membrane</location>
        <topology evidence="1">Single-pass membrane protein</topology>
    </subcellularLocation>
</comment>
<comment type="induction">
    <text evidence="3">Transcribed independently of the operon's upstream, overlapping gene (SCO3851); transcribed with srtE2 over the first 72 hours of growth. Part of the strE1-srtE2 operon.</text>
</comment>
<comment type="domain">
    <text evidence="4">The probably cytoplasmic N-terminus cannot be deleted without destabilizing the protein.</text>
</comment>
<comment type="disruption phenotype">
    <text evidence="3">A single srtE1 deletion, has a significant delay in aerial hyphae formation when grown on minimal medium, but no delay on rich medium. Nearly wild-type levels of ChpC are attached to the cell wall. A double srtE1-srtE2 knockout grown on minimal medium has a more severe delay in aerial hyphae formation and does not make spores, on rich medium initiates aerial hyphae formation later than wild-type and does not make spores. In the double mutant no ChpC is attached to the cell wall in liquid medium, on solid minimal medium chpD, chpF (SCO2699), rdlA and nepA are transcribed poorly or not at all (with no change in chpH), while very few spore chains or rodlets are seen on the aerial hyphae.</text>
</comment>
<comment type="similarity">
    <text evidence="8">Belongs to the bacterial sortase family. Class E subfamily.</text>
</comment>
<evidence type="ECO:0000255" key="1"/>
<evidence type="ECO:0000256" key="2">
    <source>
        <dbReference type="SAM" id="MobiDB-lite"/>
    </source>
</evidence>
<evidence type="ECO:0000269" key="3">
    <source>
    </source>
</evidence>
<evidence type="ECO:0000269" key="4">
    <source>
    </source>
</evidence>
<evidence type="ECO:0000303" key="5">
    <source>
    </source>
</evidence>
<evidence type="ECO:0000303" key="6">
    <source>
    </source>
</evidence>
<evidence type="ECO:0000305" key="7">
    <source>
    </source>
</evidence>
<evidence type="ECO:0000305" key="8">
    <source>
    </source>
</evidence>
<evidence type="ECO:0007744" key="9">
    <source>
        <dbReference type="PDB" id="5CUW"/>
    </source>
</evidence>
<evidence type="ECO:0007829" key="10">
    <source>
        <dbReference type="PDB" id="5CUW"/>
    </source>
</evidence>